<name>KLH36_MOUSE</name>
<dbReference type="EMBL" id="AK131135">
    <property type="protein sequence ID" value="BAD21385.1"/>
    <property type="status" value="ALT_INIT"/>
    <property type="molecule type" value="mRNA"/>
</dbReference>
<dbReference type="EMBL" id="AK157027">
    <property type="protein sequence ID" value="BAE33936.1"/>
    <property type="molecule type" value="mRNA"/>
</dbReference>
<dbReference type="EMBL" id="BC025816">
    <property type="protein sequence ID" value="AAH25816.1"/>
    <property type="molecule type" value="mRNA"/>
</dbReference>
<dbReference type="CCDS" id="CCDS22713.1"/>
<dbReference type="RefSeq" id="NP_666331.1">
    <property type="nucleotide sequence ID" value="NM_146219.1"/>
</dbReference>
<dbReference type="SMR" id="Q8R124"/>
<dbReference type="BioGRID" id="231580">
    <property type="interactions" value="1"/>
</dbReference>
<dbReference type="FunCoup" id="Q8R124">
    <property type="interactions" value="1136"/>
</dbReference>
<dbReference type="STRING" id="10090.ENSMUSP00000034287"/>
<dbReference type="iPTMnet" id="Q8R124"/>
<dbReference type="PhosphoSitePlus" id="Q8R124"/>
<dbReference type="SwissPalm" id="Q8R124"/>
<dbReference type="PaxDb" id="10090-ENSMUSP00000034287"/>
<dbReference type="ProteomicsDB" id="265005"/>
<dbReference type="Antibodypedia" id="17099">
    <property type="antibodies" value="87 antibodies from 23 providers"/>
</dbReference>
<dbReference type="DNASU" id="234796"/>
<dbReference type="Ensembl" id="ENSMUST00000034287.10">
    <property type="protein sequence ID" value="ENSMUSP00000034287.9"/>
    <property type="gene ID" value="ENSMUSG00000031828.10"/>
</dbReference>
<dbReference type="GeneID" id="234796"/>
<dbReference type="KEGG" id="mmu:234796"/>
<dbReference type="UCSC" id="uc009nql.1">
    <property type="organism name" value="mouse"/>
</dbReference>
<dbReference type="AGR" id="MGI:2385305"/>
<dbReference type="CTD" id="79786"/>
<dbReference type="MGI" id="MGI:2385305">
    <property type="gene designation" value="Klhl36"/>
</dbReference>
<dbReference type="VEuPathDB" id="HostDB:ENSMUSG00000031828"/>
<dbReference type="eggNOG" id="KOG4441">
    <property type="taxonomic scope" value="Eukaryota"/>
</dbReference>
<dbReference type="GeneTree" id="ENSGT00940000157543"/>
<dbReference type="HOGENOM" id="CLU_004253_14_3_1"/>
<dbReference type="InParanoid" id="Q8R124"/>
<dbReference type="OMA" id="RPAEDRW"/>
<dbReference type="OrthoDB" id="23411at9989"/>
<dbReference type="PhylomeDB" id="Q8R124"/>
<dbReference type="TreeFam" id="TF328485"/>
<dbReference type="UniPathway" id="UPA00143"/>
<dbReference type="BioGRID-ORCS" id="234796">
    <property type="hits" value="0 hits in 77 CRISPR screens"/>
</dbReference>
<dbReference type="PRO" id="PR:Q8R124"/>
<dbReference type="Proteomes" id="UP000000589">
    <property type="component" value="Chromosome 8"/>
</dbReference>
<dbReference type="RNAct" id="Q8R124">
    <property type="molecule type" value="protein"/>
</dbReference>
<dbReference type="Bgee" id="ENSMUSG00000031828">
    <property type="expression patterns" value="Expressed in retinal neural layer and 91 other cell types or tissues"/>
</dbReference>
<dbReference type="GO" id="GO:0097602">
    <property type="term" value="F:cullin family protein binding"/>
    <property type="evidence" value="ECO:0007669"/>
    <property type="project" value="Ensembl"/>
</dbReference>
<dbReference type="GO" id="GO:0016567">
    <property type="term" value="P:protein ubiquitination"/>
    <property type="evidence" value="ECO:0007669"/>
    <property type="project" value="UniProtKB-UniPathway"/>
</dbReference>
<dbReference type="Gene3D" id="1.25.40.420">
    <property type="match status" value="1"/>
</dbReference>
<dbReference type="Gene3D" id="2.120.10.80">
    <property type="entry name" value="Kelch-type beta propeller"/>
    <property type="match status" value="1"/>
</dbReference>
<dbReference type="Gene3D" id="3.30.710.10">
    <property type="entry name" value="Potassium Channel Kv1.1, Chain A"/>
    <property type="match status" value="1"/>
</dbReference>
<dbReference type="InterPro" id="IPR011705">
    <property type="entry name" value="BACK"/>
</dbReference>
<dbReference type="InterPro" id="IPR056737">
    <property type="entry name" value="Beta-prop_ATRN-MKLN-like"/>
</dbReference>
<dbReference type="InterPro" id="IPR017096">
    <property type="entry name" value="BTB-kelch_protein"/>
</dbReference>
<dbReference type="InterPro" id="IPR000210">
    <property type="entry name" value="BTB/POZ_dom"/>
</dbReference>
<dbReference type="InterPro" id="IPR015915">
    <property type="entry name" value="Kelch-typ_b-propeller"/>
</dbReference>
<dbReference type="InterPro" id="IPR006652">
    <property type="entry name" value="Kelch_1"/>
</dbReference>
<dbReference type="InterPro" id="IPR011333">
    <property type="entry name" value="SKP1/BTB/POZ_sf"/>
</dbReference>
<dbReference type="PANTHER" id="PTHR45632:SF4">
    <property type="entry name" value="KELCH-LIKE PROTEIN 36"/>
    <property type="match status" value="1"/>
</dbReference>
<dbReference type="PANTHER" id="PTHR45632">
    <property type="entry name" value="LD33804P"/>
    <property type="match status" value="1"/>
</dbReference>
<dbReference type="Pfam" id="PF07707">
    <property type="entry name" value="BACK"/>
    <property type="match status" value="1"/>
</dbReference>
<dbReference type="Pfam" id="PF24981">
    <property type="entry name" value="Beta-prop_ATRN-LZTR1"/>
    <property type="match status" value="1"/>
</dbReference>
<dbReference type="Pfam" id="PF00651">
    <property type="entry name" value="BTB"/>
    <property type="match status" value="1"/>
</dbReference>
<dbReference type="PIRSF" id="PIRSF037037">
    <property type="entry name" value="Kelch-like_protein_gigaxonin"/>
    <property type="match status" value="1"/>
</dbReference>
<dbReference type="SMART" id="SM00875">
    <property type="entry name" value="BACK"/>
    <property type="match status" value="1"/>
</dbReference>
<dbReference type="SMART" id="SM00225">
    <property type="entry name" value="BTB"/>
    <property type="match status" value="1"/>
</dbReference>
<dbReference type="SMART" id="SM00612">
    <property type="entry name" value="Kelch"/>
    <property type="match status" value="6"/>
</dbReference>
<dbReference type="SUPFAM" id="SSF117281">
    <property type="entry name" value="Kelch motif"/>
    <property type="match status" value="1"/>
</dbReference>
<dbReference type="SUPFAM" id="SSF54695">
    <property type="entry name" value="POZ domain"/>
    <property type="match status" value="1"/>
</dbReference>
<dbReference type="PROSITE" id="PS50097">
    <property type="entry name" value="BTB"/>
    <property type="match status" value="1"/>
</dbReference>
<comment type="function">
    <text evidence="1">Probable substrate-specific adapter of an E3 ubiquitin-protein ligase complex which mediates the ubiquitination and subsequent proteasomal degradation of target proteins.</text>
</comment>
<comment type="pathway">
    <text>Protein modification; protein ubiquitination.</text>
</comment>
<comment type="subunit">
    <text evidence="1">Interacts with CUL3.</text>
</comment>
<comment type="sequence caution" evidence="3">
    <conflict type="erroneous initiation">
        <sequence resource="EMBL-CDS" id="BAD21385"/>
    </conflict>
</comment>
<gene>
    <name type="primary">Klhl36</name>
</gene>
<accession>Q8R124</accession>
<accession>Q3U0B9</accession>
<accession>Q6KAS2</accession>
<sequence length="613" mass="69950">MEASKQMRVSRPYKISESSKVYHWPDHSTAVLQRLNEQRLHGLFCDVVLVVEEQQVPAHRNLLAVCSDYFNSMFTLGMREAFQKEVELVGTSYVGLKAVVDFLYSSELELDGSNIDYILETAHLLQIWTVVDFCCEYLEQEVSEDNYLYLQELASIYSLKRLDAFIDSFVLSHFSTLSFTPDFLQSISVQKLCVYLSSGQVQHKWEYDLLQVALQWLTQQPEREVHTRRVLENIRFPLFPEDILLQRVKLAMCSLLPSEANGEGFVEEAMHYHNSLVAQPVLQTKRTLLRSEECLLFVGGEVSERCLELSDDTCYLDTKNEQWVKETSLPARRSHHCVAVLGGFIFIAGGSFSRDNGGNAASNLLYRYDPRRKQWIKVASMNQRRVDFYLASIEDMLVAVGGRNENGALSSVETYSPKTNSWTYVAGLPRFTYGHAGTIYKDFVYISGGHDYQIGPYRKNLLCYDHRTDVWEERRPMTTARGWHSMCSLGDSIYSIGGSDDHMESMERFDVLGVEAYSPQCNQWTRVAPLLQANSESGVAVWQGRIYILGGYSWESTAFSRAVQVYDSEANRWSRGPDLPNAIAGVSACVCALNPRLEEKKKRNKDKCQDRGQ</sequence>
<protein>
    <recommendedName>
        <fullName>Kelch-like protein 36</fullName>
    </recommendedName>
</protein>
<proteinExistence type="evidence at protein level"/>
<reference key="1">
    <citation type="journal article" date="2004" name="DNA Res.">
        <title>Prediction of the coding sequences of mouse homologues of FLJ genes: the complete nucleotide sequences of 110 mouse FLJ-homologous cDNAs identified by screening of terminal sequences of cDNA clones randomly sampled from size-fractionated libraries.</title>
        <authorList>
            <person name="Okazaki N."/>
            <person name="Kikuno R."/>
            <person name="Ohara R."/>
            <person name="Inamoto S."/>
            <person name="Koseki H."/>
            <person name="Hiraoka S."/>
            <person name="Saga Y."/>
            <person name="Kitamura H."/>
            <person name="Nakagawa T."/>
            <person name="Nagase T."/>
            <person name="Ohara O."/>
            <person name="Koga H."/>
        </authorList>
    </citation>
    <scope>NUCLEOTIDE SEQUENCE [LARGE SCALE MRNA]</scope>
    <source>
        <tissue>Spleen</tissue>
    </source>
</reference>
<reference key="2">
    <citation type="journal article" date="2005" name="Science">
        <title>The transcriptional landscape of the mammalian genome.</title>
        <authorList>
            <person name="Carninci P."/>
            <person name="Kasukawa T."/>
            <person name="Katayama S."/>
            <person name="Gough J."/>
            <person name="Frith M.C."/>
            <person name="Maeda N."/>
            <person name="Oyama R."/>
            <person name="Ravasi T."/>
            <person name="Lenhard B."/>
            <person name="Wells C."/>
            <person name="Kodzius R."/>
            <person name="Shimokawa K."/>
            <person name="Bajic V.B."/>
            <person name="Brenner S.E."/>
            <person name="Batalov S."/>
            <person name="Forrest A.R."/>
            <person name="Zavolan M."/>
            <person name="Davis M.J."/>
            <person name="Wilming L.G."/>
            <person name="Aidinis V."/>
            <person name="Allen J.E."/>
            <person name="Ambesi-Impiombato A."/>
            <person name="Apweiler R."/>
            <person name="Aturaliya R.N."/>
            <person name="Bailey T.L."/>
            <person name="Bansal M."/>
            <person name="Baxter L."/>
            <person name="Beisel K.W."/>
            <person name="Bersano T."/>
            <person name="Bono H."/>
            <person name="Chalk A.M."/>
            <person name="Chiu K.P."/>
            <person name="Choudhary V."/>
            <person name="Christoffels A."/>
            <person name="Clutterbuck D.R."/>
            <person name="Crowe M.L."/>
            <person name="Dalla E."/>
            <person name="Dalrymple B.P."/>
            <person name="de Bono B."/>
            <person name="Della Gatta G."/>
            <person name="di Bernardo D."/>
            <person name="Down T."/>
            <person name="Engstrom P."/>
            <person name="Fagiolini M."/>
            <person name="Faulkner G."/>
            <person name="Fletcher C.F."/>
            <person name="Fukushima T."/>
            <person name="Furuno M."/>
            <person name="Futaki S."/>
            <person name="Gariboldi M."/>
            <person name="Georgii-Hemming P."/>
            <person name="Gingeras T.R."/>
            <person name="Gojobori T."/>
            <person name="Green R.E."/>
            <person name="Gustincich S."/>
            <person name="Harbers M."/>
            <person name="Hayashi Y."/>
            <person name="Hensch T.K."/>
            <person name="Hirokawa N."/>
            <person name="Hill D."/>
            <person name="Huminiecki L."/>
            <person name="Iacono M."/>
            <person name="Ikeo K."/>
            <person name="Iwama A."/>
            <person name="Ishikawa T."/>
            <person name="Jakt M."/>
            <person name="Kanapin A."/>
            <person name="Katoh M."/>
            <person name="Kawasawa Y."/>
            <person name="Kelso J."/>
            <person name="Kitamura H."/>
            <person name="Kitano H."/>
            <person name="Kollias G."/>
            <person name="Krishnan S.P."/>
            <person name="Kruger A."/>
            <person name="Kummerfeld S.K."/>
            <person name="Kurochkin I.V."/>
            <person name="Lareau L.F."/>
            <person name="Lazarevic D."/>
            <person name="Lipovich L."/>
            <person name="Liu J."/>
            <person name="Liuni S."/>
            <person name="McWilliam S."/>
            <person name="Madan Babu M."/>
            <person name="Madera M."/>
            <person name="Marchionni L."/>
            <person name="Matsuda H."/>
            <person name="Matsuzawa S."/>
            <person name="Miki H."/>
            <person name="Mignone F."/>
            <person name="Miyake S."/>
            <person name="Morris K."/>
            <person name="Mottagui-Tabar S."/>
            <person name="Mulder N."/>
            <person name="Nakano N."/>
            <person name="Nakauchi H."/>
            <person name="Ng P."/>
            <person name="Nilsson R."/>
            <person name="Nishiguchi S."/>
            <person name="Nishikawa S."/>
            <person name="Nori F."/>
            <person name="Ohara O."/>
            <person name="Okazaki Y."/>
            <person name="Orlando V."/>
            <person name="Pang K.C."/>
            <person name="Pavan W.J."/>
            <person name="Pavesi G."/>
            <person name="Pesole G."/>
            <person name="Petrovsky N."/>
            <person name="Piazza S."/>
            <person name="Reed J."/>
            <person name="Reid J.F."/>
            <person name="Ring B.Z."/>
            <person name="Ringwald M."/>
            <person name="Rost B."/>
            <person name="Ruan Y."/>
            <person name="Salzberg S.L."/>
            <person name="Sandelin A."/>
            <person name="Schneider C."/>
            <person name="Schoenbach C."/>
            <person name="Sekiguchi K."/>
            <person name="Semple C.A."/>
            <person name="Seno S."/>
            <person name="Sessa L."/>
            <person name="Sheng Y."/>
            <person name="Shibata Y."/>
            <person name="Shimada H."/>
            <person name="Shimada K."/>
            <person name="Silva D."/>
            <person name="Sinclair B."/>
            <person name="Sperling S."/>
            <person name="Stupka E."/>
            <person name="Sugiura K."/>
            <person name="Sultana R."/>
            <person name="Takenaka Y."/>
            <person name="Taki K."/>
            <person name="Tammoja K."/>
            <person name="Tan S.L."/>
            <person name="Tang S."/>
            <person name="Taylor M.S."/>
            <person name="Tegner J."/>
            <person name="Teichmann S.A."/>
            <person name="Ueda H.R."/>
            <person name="van Nimwegen E."/>
            <person name="Verardo R."/>
            <person name="Wei C.L."/>
            <person name="Yagi K."/>
            <person name="Yamanishi H."/>
            <person name="Zabarovsky E."/>
            <person name="Zhu S."/>
            <person name="Zimmer A."/>
            <person name="Hide W."/>
            <person name="Bult C."/>
            <person name="Grimmond S.M."/>
            <person name="Teasdale R.D."/>
            <person name="Liu E.T."/>
            <person name="Brusic V."/>
            <person name="Quackenbush J."/>
            <person name="Wahlestedt C."/>
            <person name="Mattick J.S."/>
            <person name="Hume D.A."/>
            <person name="Kai C."/>
            <person name="Sasaki D."/>
            <person name="Tomaru Y."/>
            <person name="Fukuda S."/>
            <person name="Kanamori-Katayama M."/>
            <person name="Suzuki M."/>
            <person name="Aoki J."/>
            <person name="Arakawa T."/>
            <person name="Iida J."/>
            <person name="Imamura K."/>
            <person name="Itoh M."/>
            <person name="Kato T."/>
            <person name="Kawaji H."/>
            <person name="Kawagashira N."/>
            <person name="Kawashima T."/>
            <person name="Kojima M."/>
            <person name="Kondo S."/>
            <person name="Konno H."/>
            <person name="Nakano K."/>
            <person name="Ninomiya N."/>
            <person name="Nishio T."/>
            <person name="Okada M."/>
            <person name="Plessy C."/>
            <person name="Shibata K."/>
            <person name="Shiraki T."/>
            <person name="Suzuki S."/>
            <person name="Tagami M."/>
            <person name="Waki K."/>
            <person name="Watahiki A."/>
            <person name="Okamura-Oho Y."/>
            <person name="Suzuki H."/>
            <person name="Kawai J."/>
            <person name="Hayashizaki Y."/>
        </authorList>
    </citation>
    <scope>NUCLEOTIDE SEQUENCE [LARGE SCALE MRNA]</scope>
    <source>
        <strain>C57BL/6J</strain>
        <strain>NOD</strain>
        <tissue>Spleen</tissue>
    </source>
</reference>
<reference key="3">
    <citation type="journal article" date="2004" name="Genome Res.">
        <title>The status, quality, and expansion of the NIH full-length cDNA project: the Mammalian Gene Collection (MGC).</title>
        <authorList>
            <consortium name="The MGC Project Team"/>
        </authorList>
    </citation>
    <scope>NUCLEOTIDE SEQUENCE [LARGE SCALE MRNA]</scope>
    <source>
        <strain>FVB/N</strain>
        <tissue>Liver</tissue>
    </source>
</reference>
<reference key="4">
    <citation type="journal article" date="2010" name="Cell">
        <title>A tissue-specific atlas of mouse protein phosphorylation and expression.</title>
        <authorList>
            <person name="Huttlin E.L."/>
            <person name="Jedrychowski M.P."/>
            <person name="Elias J.E."/>
            <person name="Goswami T."/>
            <person name="Rad R."/>
            <person name="Beausoleil S.A."/>
            <person name="Villen J."/>
            <person name="Haas W."/>
            <person name="Sowa M.E."/>
            <person name="Gygi S.P."/>
        </authorList>
    </citation>
    <scope>IDENTIFICATION BY MASS SPECTROMETRY [LARGE SCALE ANALYSIS]</scope>
    <source>
        <tissue>Testis</tissue>
    </source>
</reference>
<feature type="chain" id="PRO_0000274692" description="Kelch-like protein 36">
    <location>
        <begin position="1"/>
        <end position="613"/>
    </location>
</feature>
<feature type="domain" description="BTB" evidence="2">
    <location>
        <begin position="45"/>
        <end position="112"/>
    </location>
</feature>
<feature type="domain" description="BACK">
    <location>
        <begin position="147"/>
        <end position="249"/>
    </location>
</feature>
<feature type="repeat" description="Kelch 1">
    <location>
        <begin position="294"/>
        <end position="343"/>
    </location>
</feature>
<feature type="repeat" description="Kelch 2">
    <location>
        <begin position="344"/>
        <end position="395"/>
    </location>
</feature>
<feature type="repeat" description="Kelch 3">
    <location>
        <begin position="396"/>
        <end position="442"/>
    </location>
</feature>
<feature type="repeat" description="Kelch 4">
    <location>
        <begin position="444"/>
        <end position="491"/>
    </location>
</feature>
<feature type="repeat" description="Kelch 5">
    <location>
        <begin position="492"/>
        <end position="544"/>
    </location>
</feature>
<feature type="repeat" description="Kelch 6">
    <location>
        <begin position="545"/>
        <end position="593"/>
    </location>
</feature>
<feature type="sequence conflict" description="In Ref. 2; BAE33936." evidence="3" ref="2">
    <original>R</original>
    <variation>C</variation>
    <location>
        <position position="372"/>
    </location>
</feature>
<evidence type="ECO:0000250" key="1"/>
<evidence type="ECO:0000255" key="2">
    <source>
        <dbReference type="PROSITE-ProRule" id="PRU00037"/>
    </source>
</evidence>
<evidence type="ECO:0000305" key="3"/>
<organism>
    <name type="scientific">Mus musculus</name>
    <name type="common">Mouse</name>
    <dbReference type="NCBI Taxonomy" id="10090"/>
    <lineage>
        <taxon>Eukaryota</taxon>
        <taxon>Metazoa</taxon>
        <taxon>Chordata</taxon>
        <taxon>Craniata</taxon>
        <taxon>Vertebrata</taxon>
        <taxon>Euteleostomi</taxon>
        <taxon>Mammalia</taxon>
        <taxon>Eutheria</taxon>
        <taxon>Euarchontoglires</taxon>
        <taxon>Glires</taxon>
        <taxon>Rodentia</taxon>
        <taxon>Myomorpha</taxon>
        <taxon>Muroidea</taxon>
        <taxon>Muridae</taxon>
        <taxon>Murinae</taxon>
        <taxon>Mus</taxon>
        <taxon>Mus</taxon>
    </lineage>
</organism>
<keyword id="KW-0880">Kelch repeat</keyword>
<keyword id="KW-1185">Reference proteome</keyword>
<keyword id="KW-0677">Repeat</keyword>
<keyword id="KW-0833">Ubl conjugation pathway</keyword>